<organism>
    <name type="scientific">Escherichia coli (strain UTI89 / UPEC)</name>
    <dbReference type="NCBI Taxonomy" id="364106"/>
    <lineage>
        <taxon>Bacteria</taxon>
        <taxon>Pseudomonadati</taxon>
        <taxon>Pseudomonadota</taxon>
        <taxon>Gammaproteobacteria</taxon>
        <taxon>Enterobacterales</taxon>
        <taxon>Enterobacteriaceae</taxon>
        <taxon>Escherichia</taxon>
    </lineage>
</organism>
<feature type="chain" id="PRO_0000269807" description="Pyridoxal kinase PdxY">
    <location>
        <begin position="1"/>
        <end position="287"/>
    </location>
</feature>
<feature type="binding site" evidence="1">
    <location>
        <position position="10"/>
    </location>
    <ligand>
        <name>substrate</name>
    </ligand>
</feature>
<feature type="binding site" evidence="1">
    <location>
        <begin position="45"/>
        <end position="46"/>
    </location>
    <ligand>
        <name>substrate</name>
    </ligand>
</feature>
<feature type="binding site" evidence="1">
    <location>
        <position position="112"/>
    </location>
    <ligand>
        <name>ATP</name>
        <dbReference type="ChEBI" id="CHEBI:30616"/>
    </ligand>
</feature>
<feature type="binding site" evidence="1">
    <location>
        <position position="144"/>
    </location>
    <ligand>
        <name>ATP</name>
        <dbReference type="ChEBI" id="CHEBI:30616"/>
    </ligand>
</feature>
<feature type="binding site" evidence="1">
    <location>
        <position position="149"/>
    </location>
    <ligand>
        <name>ATP</name>
        <dbReference type="ChEBI" id="CHEBI:30616"/>
    </ligand>
</feature>
<feature type="binding site" evidence="1">
    <location>
        <position position="182"/>
    </location>
    <ligand>
        <name>ATP</name>
        <dbReference type="ChEBI" id="CHEBI:30616"/>
    </ligand>
</feature>
<feature type="binding site" evidence="1">
    <location>
        <begin position="209"/>
        <end position="212"/>
    </location>
    <ligand>
        <name>ATP</name>
        <dbReference type="ChEBI" id="CHEBI:30616"/>
    </ligand>
</feature>
<feature type="binding site" evidence="1">
    <location>
        <position position="224"/>
    </location>
    <ligand>
        <name>substrate</name>
    </ligand>
</feature>
<keyword id="KW-0067">ATP-binding</keyword>
<keyword id="KW-0418">Kinase</keyword>
<keyword id="KW-0460">Magnesium</keyword>
<keyword id="KW-0547">Nucleotide-binding</keyword>
<keyword id="KW-0808">Transferase</keyword>
<name>PDXY_ECOUT</name>
<evidence type="ECO:0000255" key="1">
    <source>
        <dbReference type="HAMAP-Rule" id="MF_01639"/>
    </source>
</evidence>
<sequence length="287" mass="31334">MMKNILAIQSHVVYGHAGNSAAEFPMRRLGANVWPLNTVQFSNHTQYGKWTGCVMPPSHLTEIVQGIAAIDKLHTCDAVLSGYLGSAEQGEHILGIVRQVKAANPQAKYFCDPVMGHPEKGCIVAPGVAEFHVRHGLPASDIIAPNLVELEILCEHPVNNVEEAVLAARELIAQGPQIVLVKHLARAGYSRDRFEMLLVTADEAWHISRPLVDFGMRQPVGVGDVTSGLLLVKLLQGATLQEALEHVTAAVYEIMVTTKAMQEYELQVVAAQDRIANPEHYFSATKL</sequence>
<reference key="1">
    <citation type="journal article" date="2006" name="Proc. Natl. Acad. Sci. U.S.A.">
        <title>Identification of genes subject to positive selection in uropathogenic strains of Escherichia coli: a comparative genomics approach.</title>
        <authorList>
            <person name="Chen S.L."/>
            <person name="Hung C.-S."/>
            <person name="Xu J."/>
            <person name="Reigstad C.S."/>
            <person name="Magrini V."/>
            <person name="Sabo A."/>
            <person name="Blasiar D."/>
            <person name="Bieri T."/>
            <person name="Meyer R.R."/>
            <person name="Ozersky P."/>
            <person name="Armstrong J.R."/>
            <person name="Fulton R.S."/>
            <person name="Latreille J.P."/>
            <person name="Spieth J."/>
            <person name="Hooton T.M."/>
            <person name="Mardis E.R."/>
            <person name="Hultgren S.J."/>
            <person name="Gordon J.I."/>
        </authorList>
    </citation>
    <scope>NUCLEOTIDE SEQUENCE [LARGE SCALE GENOMIC DNA]</scope>
    <source>
        <strain>UTI89 / UPEC</strain>
    </source>
</reference>
<dbReference type="EC" id="2.7.1.35" evidence="1"/>
<dbReference type="EMBL" id="CP000243">
    <property type="protein sequence ID" value="ABE07305.1"/>
    <property type="molecule type" value="Genomic_DNA"/>
</dbReference>
<dbReference type="SMR" id="Q1RBF9"/>
<dbReference type="KEGG" id="eci:UTI89_C1827"/>
<dbReference type="HOGENOM" id="CLU_046496_3_0_6"/>
<dbReference type="UniPathway" id="UPA01068">
    <property type="reaction ID" value="UER00298"/>
</dbReference>
<dbReference type="Proteomes" id="UP000001952">
    <property type="component" value="Chromosome"/>
</dbReference>
<dbReference type="GO" id="GO:0005829">
    <property type="term" value="C:cytosol"/>
    <property type="evidence" value="ECO:0007669"/>
    <property type="project" value="TreeGrafter"/>
</dbReference>
<dbReference type="GO" id="GO:0005524">
    <property type="term" value="F:ATP binding"/>
    <property type="evidence" value="ECO:0007669"/>
    <property type="project" value="UniProtKB-UniRule"/>
</dbReference>
<dbReference type="GO" id="GO:0000287">
    <property type="term" value="F:magnesium ion binding"/>
    <property type="evidence" value="ECO:0007669"/>
    <property type="project" value="UniProtKB-UniRule"/>
</dbReference>
<dbReference type="GO" id="GO:0008478">
    <property type="term" value="F:pyridoxal kinase activity"/>
    <property type="evidence" value="ECO:0007669"/>
    <property type="project" value="UniProtKB-UniRule"/>
</dbReference>
<dbReference type="GO" id="GO:0009443">
    <property type="term" value="P:pyridoxal 5'-phosphate salvage"/>
    <property type="evidence" value="ECO:0007669"/>
    <property type="project" value="UniProtKB-UniRule"/>
</dbReference>
<dbReference type="CDD" id="cd01173">
    <property type="entry name" value="pyridoxal_pyridoxamine_kinase"/>
    <property type="match status" value="1"/>
</dbReference>
<dbReference type="FunFam" id="3.40.1190.20:FF:000008">
    <property type="entry name" value="Pyridoxal kinase PdxY"/>
    <property type="match status" value="1"/>
</dbReference>
<dbReference type="Gene3D" id="3.40.1190.20">
    <property type="match status" value="1"/>
</dbReference>
<dbReference type="HAMAP" id="MF_01639">
    <property type="entry name" value="PdxY"/>
    <property type="match status" value="1"/>
</dbReference>
<dbReference type="InterPro" id="IPR013749">
    <property type="entry name" value="PM/HMP-P_kinase-1"/>
</dbReference>
<dbReference type="InterPro" id="IPR004625">
    <property type="entry name" value="PyrdxlKinase"/>
</dbReference>
<dbReference type="InterPro" id="IPR023685">
    <property type="entry name" value="Pyridoxal_kinase_PdxY"/>
</dbReference>
<dbReference type="InterPro" id="IPR029056">
    <property type="entry name" value="Ribokinase-like"/>
</dbReference>
<dbReference type="NCBIfam" id="NF004398">
    <property type="entry name" value="PRK05756.1"/>
    <property type="match status" value="1"/>
</dbReference>
<dbReference type="NCBIfam" id="TIGR00687">
    <property type="entry name" value="pyridox_kin"/>
    <property type="match status" value="1"/>
</dbReference>
<dbReference type="PANTHER" id="PTHR10534">
    <property type="entry name" value="PYRIDOXAL KINASE"/>
    <property type="match status" value="1"/>
</dbReference>
<dbReference type="PANTHER" id="PTHR10534:SF2">
    <property type="entry name" value="PYRIDOXAL KINASE"/>
    <property type="match status" value="1"/>
</dbReference>
<dbReference type="Pfam" id="PF08543">
    <property type="entry name" value="Phos_pyr_kin"/>
    <property type="match status" value="1"/>
</dbReference>
<dbReference type="SUPFAM" id="SSF53613">
    <property type="entry name" value="Ribokinase-like"/>
    <property type="match status" value="1"/>
</dbReference>
<proteinExistence type="inferred from homology"/>
<accession>Q1RBF9</accession>
<comment type="function">
    <text evidence="1">Pyridoxal kinase involved in the salvage pathway of pyridoxal 5'-phosphate (PLP). Catalyzes the phosphorylation of pyridoxal to PLP.</text>
</comment>
<comment type="catalytic activity">
    <reaction evidence="1">
        <text>pyridoxal + ATP = pyridoxal 5'-phosphate + ADP + H(+)</text>
        <dbReference type="Rhea" id="RHEA:10224"/>
        <dbReference type="ChEBI" id="CHEBI:15378"/>
        <dbReference type="ChEBI" id="CHEBI:17310"/>
        <dbReference type="ChEBI" id="CHEBI:30616"/>
        <dbReference type="ChEBI" id="CHEBI:456216"/>
        <dbReference type="ChEBI" id="CHEBI:597326"/>
        <dbReference type="EC" id="2.7.1.35"/>
    </reaction>
</comment>
<comment type="cofactor">
    <cofactor evidence="1">
        <name>Mg(2+)</name>
        <dbReference type="ChEBI" id="CHEBI:18420"/>
    </cofactor>
</comment>
<comment type="pathway">
    <text evidence="1">Cofactor metabolism; pyridoxal 5'-phosphate salvage; pyridoxal 5'-phosphate from pyridoxal: step 1/1.</text>
</comment>
<comment type="subunit">
    <text evidence="1">Homodimer.</text>
</comment>
<comment type="similarity">
    <text evidence="1">Belongs to the pyridoxine kinase family. PdxY subfamily.</text>
</comment>
<protein>
    <recommendedName>
        <fullName evidence="1">Pyridoxal kinase PdxY</fullName>
        <shortName evidence="1">PL kinase</shortName>
        <ecNumber evidence="1">2.7.1.35</ecNumber>
    </recommendedName>
</protein>
<gene>
    <name evidence="1" type="primary">pdxY</name>
    <name type="ordered locus">UTI89_C1827</name>
</gene>